<proteinExistence type="inferred from homology"/>
<name>MURB_STAAS</name>
<accession>Q6GB92</accession>
<gene>
    <name evidence="1" type="primary">murB</name>
    <name type="ordered locus">SAS0703</name>
</gene>
<reference key="1">
    <citation type="journal article" date="2004" name="Proc. Natl. Acad. Sci. U.S.A.">
        <title>Complete genomes of two clinical Staphylococcus aureus strains: evidence for the rapid evolution of virulence and drug resistance.</title>
        <authorList>
            <person name="Holden M.T.G."/>
            <person name="Feil E.J."/>
            <person name="Lindsay J.A."/>
            <person name="Peacock S.J."/>
            <person name="Day N.P.J."/>
            <person name="Enright M.C."/>
            <person name="Foster T.J."/>
            <person name="Moore C.E."/>
            <person name="Hurst L."/>
            <person name="Atkin R."/>
            <person name="Barron A."/>
            <person name="Bason N."/>
            <person name="Bentley S.D."/>
            <person name="Chillingworth C."/>
            <person name="Chillingworth T."/>
            <person name="Churcher C."/>
            <person name="Clark L."/>
            <person name="Corton C."/>
            <person name="Cronin A."/>
            <person name="Doggett J."/>
            <person name="Dowd L."/>
            <person name="Feltwell T."/>
            <person name="Hance Z."/>
            <person name="Harris B."/>
            <person name="Hauser H."/>
            <person name="Holroyd S."/>
            <person name="Jagels K."/>
            <person name="James K.D."/>
            <person name="Lennard N."/>
            <person name="Line A."/>
            <person name="Mayes R."/>
            <person name="Moule S."/>
            <person name="Mungall K."/>
            <person name="Ormond D."/>
            <person name="Quail M.A."/>
            <person name="Rabbinowitsch E."/>
            <person name="Rutherford K.M."/>
            <person name="Sanders M."/>
            <person name="Sharp S."/>
            <person name="Simmonds M."/>
            <person name="Stevens K."/>
            <person name="Whitehead S."/>
            <person name="Barrell B.G."/>
            <person name="Spratt B.G."/>
            <person name="Parkhill J."/>
        </authorList>
    </citation>
    <scope>NUCLEOTIDE SEQUENCE [LARGE SCALE GENOMIC DNA]</scope>
    <source>
        <strain>MSSA476</strain>
    </source>
</reference>
<comment type="function">
    <text evidence="1">Cell wall formation.</text>
</comment>
<comment type="catalytic activity">
    <reaction evidence="1">
        <text>UDP-N-acetyl-alpha-D-muramate + NADP(+) = UDP-N-acetyl-3-O-(1-carboxyvinyl)-alpha-D-glucosamine + NADPH + H(+)</text>
        <dbReference type="Rhea" id="RHEA:12248"/>
        <dbReference type="ChEBI" id="CHEBI:15378"/>
        <dbReference type="ChEBI" id="CHEBI:57783"/>
        <dbReference type="ChEBI" id="CHEBI:58349"/>
        <dbReference type="ChEBI" id="CHEBI:68483"/>
        <dbReference type="ChEBI" id="CHEBI:70757"/>
        <dbReference type="EC" id="1.3.1.98"/>
    </reaction>
</comment>
<comment type="cofactor">
    <cofactor evidence="1">
        <name>FAD</name>
        <dbReference type="ChEBI" id="CHEBI:57692"/>
    </cofactor>
</comment>
<comment type="pathway">
    <text evidence="1">Cell wall biogenesis; peptidoglycan biosynthesis.</text>
</comment>
<comment type="subcellular location">
    <subcellularLocation>
        <location evidence="1">Cytoplasm</location>
    </subcellularLocation>
</comment>
<comment type="similarity">
    <text evidence="1">Belongs to the MurB family.</text>
</comment>
<feature type="chain" id="PRO_0000179260" description="UDP-N-acetylenolpyruvoylglucosamine reductase">
    <location>
        <begin position="1"/>
        <end position="307"/>
    </location>
</feature>
<feature type="domain" description="FAD-binding PCMH-type" evidence="1">
    <location>
        <begin position="33"/>
        <end position="197"/>
    </location>
</feature>
<feature type="active site" evidence="1">
    <location>
        <position position="176"/>
    </location>
</feature>
<feature type="active site" description="Proton donor" evidence="1">
    <location>
        <position position="226"/>
    </location>
</feature>
<feature type="active site" evidence="1">
    <location>
        <position position="296"/>
    </location>
</feature>
<protein>
    <recommendedName>
        <fullName evidence="1">UDP-N-acetylenolpyruvoylglucosamine reductase</fullName>
        <ecNumber evidence="1">1.3.1.98</ecNumber>
    </recommendedName>
    <alternativeName>
        <fullName evidence="1">UDP-N-acetylmuramate dehydrogenase</fullName>
    </alternativeName>
</protein>
<keyword id="KW-0131">Cell cycle</keyword>
<keyword id="KW-0132">Cell division</keyword>
<keyword id="KW-0133">Cell shape</keyword>
<keyword id="KW-0961">Cell wall biogenesis/degradation</keyword>
<keyword id="KW-0963">Cytoplasm</keyword>
<keyword id="KW-0274">FAD</keyword>
<keyword id="KW-0285">Flavoprotein</keyword>
<keyword id="KW-0521">NADP</keyword>
<keyword id="KW-0560">Oxidoreductase</keyword>
<keyword id="KW-0573">Peptidoglycan synthesis</keyword>
<evidence type="ECO:0000255" key="1">
    <source>
        <dbReference type="HAMAP-Rule" id="MF_00037"/>
    </source>
</evidence>
<organism>
    <name type="scientific">Staphylococcus aureus (strain MSSA476)</name>
    <dbReference type="NCBI Taxonomy" id="282459"/>
    <lineage>
        <taxon>Bacteria</taxon>
        <taxon>Bacillati</taxon>
        <taxon>Bacillota</taxon>
        <taxon>Bacilli</taxon>
        <taxon>Bacillales</taxon>
        <taxon>Staphylococcaceae</taxon>
        <taxon>Staphylococcus</taxon>
    </lineage>
</organism>
<dbReference type="EC" id="1.3.1.98" evidence="1"/>
<dbReference type="EMBL" id="BX571857">
    <property type="protein sequence ID" value="CAG42479.1"/>
    <property type="molecule type" value="Genomic_DNA"/>
</dbReference>
<dbReference type="RefSeq" id="WP_000608440.1">
    <property type="nucleotide sequence ID" value="NC_002953.3"/>
</dbReference>
<dbReference type="SMR" id="Q6GB92"/>
<dbReference type="KEGG" id="sas:SAS0703"/>
<dbReference type="HOGENOM" id="CLU_035304_1_1_9"/>
<dbReference type="UniPathway" id="UPA00219"/>
<dbReference type="GO" id="GO:0005829">
    <property type="term" value="C:cytosol"/>
    <property type="evidence" value="ECO:0007669"/>
    <property type="project" value="TreeGrafter"/>
</dbReference>
<dbReference type="GO" id="GO:0071949">
    <property type="term" value="F:FAD binding"/>
    <property type="evidence" value="ECO:0007669"/>
    <property type="project" value="InterPro"/>
</dbReference>
<dbReference type="GO" id="GO:0008762">
    <property type="term" value="F:UDP-N-acetylmuramate dehydrogenase activity"/>
    <property type="evidence" value="ECO:0007669"/>
    <property type="project" value="UniProtKB-UniRule"/>
</dbReference>
<dbReference type="GO" id="GO:0051301">
    <property type="term" value="P:cell division"/>
    <property type="evidence" value="ECO:0007669"/>
    <property type="project" value="UniProtKB-KW"/>
</dbReference>
<dbReference type="GO" id="GO:0071555">
    <property type="term" value="P:cell wall organization"/>
    <property type="evidence" value="ECO:0007669"/>
    <property type="project" value="UniProtKB-KW"/>
</dbReference>
<dbReference type="GO" id="GO:0009252">
    <property type="term" value="P:peptidoglycan biosynthetic process"/>
    <property type="evidence" value="ECO:0007669"/>
    <property type="project" value="UniProtKB-UniRule"/>
</dbReference>
<dbReference type="GO" id="GO:0008360">
    <property type="term" value="P:regulation of cell shape"/>
    <property type="evidence" value="ECO:0007669"/>
    <property type="project" value="UniProtKB-KW"/>
</dbReference>
<dbReference type="FunFam" id="3.90.78.10:FF:000001">
    <property type="entry name" value="UDP-N-acetylenolpyruvoylglucosamine reductase"/>
    <property type="match status" value="1"/>
</dbReference>
<dbReference type="Gene3D" id="3.30.465.10">
    <property type="match status" value="1"/>
</dbReference>
<dbReference type="Gene3D" id="3.90.78.10">
    <property type="entry name" value="UDP-N-acetylenolpyruvoylglucosamine reductase, C-terminal domain"/>
    <property type="match status" value="1"/>
</dbReference>
<dbReference type="Gene3D" id="3.30.43.10">
    <property type="entry name" value="Uridine Diphospho-n-acetylenolpyruvylglucosamine Reductase, domain 2"/>
    <property type="match status" value="1"/>
</dbReference>
<dbReference type="HAMAP" id="MF_00037">
    <property type="entry name" value="MurB"/>
    <property type="match status" value="1"/>
</dbReference>
<dbReference type="InterPro" id="IPR016166">
    <property type="entry name" value="FAD-bd_PCMH"/>
</dbReference>
<dbReference type="InterPro" id="IPR036318">
    <property type="entry name" value="FAD-bd_PCMH-like_sf"/>
</dbReference>
<dbReference type="InterPro" id="IPR016167">
    <property type="entry name" value="FAD-bd_PCMH_sub1"/>
</dbReference>
<dbReference type="InterPro" id="IPR016169">
    <property type="entry name" value="FAD-bd_PCMH_sub2"/>
</dbReference>
<dbReference type="InterPro" id="IPR003170">
    <property type="entry name" value="MurB"/>
</dbReference>
<dbReference type="InterPro" id="IPR011601">
    <property type="entry name" value="MurB_C"/>
</dbReference>
<dbReference type="InterPro" id="IPR036635">
    <property type="entry name" value="MurB_C_sf"/>
</dbReference>
<dbReference type="InterPro" id="IPR006094">
    <property type="entry name" value="Oxid_FAD_bind_N"/>
</dbReference>
<dbReference type="NCBIfam" id="TIGR00179">
    <property type="entry name" value="murB"/>
    <property type="match status" value="1"/>
</dbReference>
<dbReference type="NCBIfam" id="NF010480">
    <property type="entry name" value="PRK13905.1"/>
    <property type="match status" value="1"/>
</dbReference>
<dbReference type="PANTHER" id="PTHR21071">
    <property type="entry name" value="UDP-N-ACETYLENOLPYRUVOYLGLUCOSAMINE REDUCTASE"/>
    <property type="match status" value="1"/>
</dbReference>
<dbReference type="PANTHER" id="PTHR21071:SF4">
    <property type="entry name" value="UDP-N-ACETYLENOLPYRUVOYLGLUCOSAMINE REDUCTASE"/>
    <property type="match status" value="1"/>
</dbReference>
<dbReference type="Pfam" id="PF01565">
    <property type="entry name" value="FAD_binding_4"/>
    <property type="match status" value="1"/>
</dbReference>
<dbReference type="Pfam" id="PF02873">
    <property type="entry name" value="MurB_C"/>
    <property type="match status" value="1"/>
</dbReference>
<dbReference type="SUPFAM" id="SSF56176">
    <property type="entry name" value="FAD-binding/transporter-associated domain-like"/>
    <property type="match status" value="1"/>
</dbReference>
<dbReference type="SUPFAM" id="SSF56194">
    <property type="entry name" value="Uridine diphospho-N-Acetylenolpyruvylglucosamine reductase, MurB, C-terminal domain"/>
    <property type="match status" value="1"/>
</dbReference>
<dbReference type="PROSITE" id="PS51387">
    <property type="entry name" value="FAD_PCMH"/>
    <property type="match status" value="1"/>
</dbReference>
<sequence>MINKDIYQALQQLIPNEKIKVDEPLKRYTYTKTGGNADFYITPTKNEEVQAVVKYAYQNEIPVTYLGNGSNIIIREGGIRGIVISLLSLDHIEVSDDAIIAGSGAAIIDVSRVARDYALTGLEFACGIPGSIGGAVYMNAGAYGGEVKDCIDYALCVNEQGSLIKLTTKELELDYRNSIIQKEHLVVLEAAFTLAPGKMTEIQAKMDDLTERRESKQPLEYPSCGSVFQRPPGHFAGKLIQDSNLQGHRIGGVEVSTKHAGFMVNVDNGTATDYENLIHYVQKTVKEKFGIELNREVRIIGEHPKES</sequence>